<dbReference type="EC" id="1.14.11.2" evidence="2"/>
<dbReference type="EMBL" id="AY313450">
    <property type="protein sequence ID" value="AAQ87605.1"/>
    <property type="molecule type" value="mRNA"/>
</dbReference>
<dbReference type="RefSeq" id="NP_942070.1">
    <property type="nucleotide sequence ID" value="NM_198775.1"/>
</dbReference>
<dbReference type="SMR" id="Q6W3E9"/>
<dbReference type="FunCoup" id="Q6W3E9">
    <property type="interactions" value="14"/>
</dbReference>
<dbReference type="IntAct" id="Q6W3E9">
    <property type="interactions" value="1"/>
</dbReference>
<dbReference type="STRING" id="10116.ENSRNOP00000049901"/>
<dbReference type="GlyCosmos" id="Q6W3E9">
    <property type="glycosylation" value="2 sites, No reported glycans"/>
</dbReference>
<dbReference type="GlyGen" id="Q6W3E9">
    <property type="glycosylation" value="2 sites"/>
</dbReference>
<dbReference type="PhosphoSitePlus" id="Q6W3E9"/>
<dbReference type="PaxDb" id="10116-ENSRNOP00000049901"/>
<dbReference type="GeneID" id="361612"/>
<dbReference type="KEGG" id="rno:361612"/>
<dbReference type="UCSC" id="RGD:735150">
    <property type="organism name" value="rat"/>
</dbReference>
<dbReference type="AGR" id="RGD:735150"/>
<dbReference type="CTD" id="283208"/>
<dbReference type="RGD" id="735150">
    <property type="gene designation" value="P4ha3"/>
</dbReference>
<dbReference type="eggNOG" id="KOG1591">
    <property type="taxonomic scope" value="Eukaryota"/>
</dbReference>
<dbReference type="InParanoid" id="Q6W3E9"/>
<dbReference type="PhylomeDB" id="Q6W3E9"/>
<dbReference type="BRENDA" id="1.14.11.2">
    <property type="organism ID" value="5301"/>
</dbReference>
<dbReference type="Reactome" id="R-RNO-1650814">
    <property type="pathway name" value="Collagen biosynthesis and modifying enzymes"/>
</dbReference>
<dbReference type="PRO" id="PR:Q6W3E9"/>
<dbReference type="Proteomes" id="UP000002494">
    <property type="component" value="Unplaced"/>
</dbReference>
<dbReference type="GO" id="GO:0005783">
    <property type="term" value="C:endoplasmic reticulum"/>
    <property type="evidence" value="ECO:0000318"/>
    <property type="project" value="GO_Central"/>
</dbReference>
<dbReference type="GO" id="GO:0005788">
    <property type="term" value="C:endoplasmic reticulum lumen"/>
    <property type="evidence" value="ECO:0007669"/>
    <property type="project" value="UniProtKB-SubCell"/>
</dbReference>
<dbReference type="GO" id="GO:0016222">
    <property type="term" value="C:procollagen-proline 4-dioxygenase complex"/>
    <property type="evidence" value="ECO:0000304"/>
    <property type="project" value="RGD"/>
</dbReference>
<dbReference type="GO" id="GO:0005506">
    <property type="term" value="F:iron ion binding"/>
    <property type="evidence" value="ECO:0007669"/>
    <property type="project" value="InterPro"/>
</dbReference>
<dbReference type="GO" id="GO:0031418">
    <property type="term" value="F:L-ascorbic acid binding"/>
    <property type="evidence" value="ECO:0007669"/>
    <property type="project" value="UniProtKB-KW"/>
</dbReference>
<dbReference type="GO" id="GO:0004656">
    <property type="term" value="F:procollagen-proline 4-dioxygenase activity"/>
    <property type="evidence" value="ECO:0000315"/>
    <property type="project" value="RGD"/>
</dbReference>
<dbReference type="GO" id="GO:0030199">
    <property type="term" value="P:collagen fibril organization"/>
    <property type="evidence" value="ECO:0000318"/>
    <property type="project" value="GO_Central"/>
</dbReference>
<dbReference type="FunFam" id="2.60.120.620:FF:000013">
    <property type="entry name" value="Prolyl 4-hydroxylase subunit alpha 3"/>
    <property type="match status" value="1"/>
</dbReference>
<dbReference type="FunFam" id="1.25.40.10:FF:000161">
    <property type="entry name" value="prolyl 4-hydroxylase subunit alpha-3 isoform X1"/>
    <property type="match status" value="1"/>
</dbReference>
<dbReference type="Gene3D" id="6.10.140.1460">
    <property type="match status" value="1"/>
</dbReference>
<dbReference type="Gene3D" id="2.60.120.620">
    <property type="entry name" value="q2cbj1_9rhob like domain"/>
    <property type="match status" value="1"/>
</dbReference>
<dbReference type="Gene3D" id="1.25.40.10">
    <property type="entry name" value="Tetratricopeptide repeat domain"/>
    <property type="match status" value="1"/>
</dbReference>
<dbReference type="InterPro" id="IPR005123">
    <property type="entry name" value="Oxoglu/Fe-dep_dioxygenase_dom"/>
</dbReference>
<dbReference type="InterPro" id="IPR045054">
    <property type="entry name" value="P4HA-like"/>
</dbReference>
<dbReference type="InterPro" id="IPR006620">
    <property type="entry name" value="Pro_4_hyd_alph"/>
</dbReference>
<dbReference type="InterPro" id="IPR044862">
    <property type="entry name" value="Pro_4_hyd_alph_FE2OG_OXY"/>
</dbReference>
<dbReference type="InterPro" id="IPR013547">
    <property type="entry name" value="Pro_4_hyd_alph_N"/>
</dbReference>
<dbReference type="InterPro" id="IPR011990">
    <property type="entry name" value="TPR-like_helical_dom_sf"/>
</dbReference>
<dbReference type="PANTHER" id="PTHR10869">
    <property type="entry name" value="PROLYL 4-HYDROXYLASE ALPHA SUBUNIT"/>
    <property type="match status" value="1"/>
</dbReference>
<dbReference type="PANTHER" id="PTHR10869:SF223">
    <property type="entry name" value="PROLYL 4-HYDROXYLASE SUBUNIT ALPHA-3"/>
    <property type="match status" value="1"/>
</dbReference>
<dbReference type="Pfam" id="PF13640">
    <property type="entry name" value="2OG-FeII_Oxy_3"/>
    <property type="match status" value="1"/>
</dbReference>
<dbReference type="Pfam" id="PF08336">
    <property type="entry name" value="P4Ha_N"/>
    <property type="match status" value="1"/>
</dbReference>
<dbReference type="Pfam" id="PF23558">
    <property type="entry name" value="TPR_P4H"/>
    <property type="match status" value="1"/>
</dbReference>
<dbReference type="SMART" id="SM00702">
    <property type="entry name" value="P4Hc"/>
    <property type="match status" value="1"/>
</dbReference>
<dbReference type="SUPFAM" id="SSF48452">
    <property type="entry name" value="TPR-like"/>
    <property type="match status" value="1"/>
</dbReference>
<dbReference type="PROSITE" id="PS51471">
    <property type="entry name" value="FE2OG_OXY"/>
    <property type="match status" value="1"/>
</dbReference>
<name>P4HA3_RAT</name>
<sequence>MGPGARLAALLVLLKLGVGDPAAAAGREDTFSALTSVARALAPERRLLGTLRRYLRGEEARLRDLTRFYDKVLSLHEDLKIPVVNPLLVFTLIKRLPSDWRNVVHSLEATENIRAPKDGYEKVEQDLPAFEDLEGAARALMRLQDAYMLNVKGLAQGVFQRVTGSSITDLYSPRQLFSLTADDCFQVGKVAYDTGDYYHAIPWLEEAVSLFRRSYGEWKTEDEASLEDALDYLAFACYQVGNVSCALSLSREFLVYSPDNKRMARNVLKYERLLAENGHLMAAETAIQRPNVPHLQTRDTYEGLCQTLGSQPTHYQIPSLYCSYETNSSPYLLLQPARKEVIHLRPLVALYHDFVSDEEAQKIRELAEPWLQRSVVASGEKQLQVEYRISKSAWLKDTVDPVLVTLDRRIAALTGLDIQPPYAEYLQVVNYGIGGHYEPHFDHATSPSSPLYKMKSGNRAATLMIYLSSVEAGGATAFIYGNFSVPVVKNAALFWWNLHRSGEGDDDTLHAGCPVLVGDKWVANKWIHEYGQEFRRPCDTNPED</sequence>
<keyword id="KW-0223">Dioxygenase</keyword>
<keyword id="KW-0256">Endoplasmic reticulum</keyword>
<keyword id="KW-0325">Glycoprotein</keyword>
<keyword id="KW-0408">Iron</keyword>
<keyword id="KW-0479">Metal-binding</keyword>
<keyword id="KW-0560">Oxidoreductase</keyword>
<keyword id="KW-1185">Reference proteome</keyword>
<keyword id="KW-0732">Signal</keyword>
<keyword id="KW-0802">TPR repeat</keyword>
<keyword id="KW-0847">Vitamin C</keyword>
<proteinExistence type="evidence at transcript level"/>
<organism>
    <name type="scientific">Rattus norvegicus</name>
    <name type="common">Rat</name>
    <dbReference type="NCBI Taxonomy" id="10116"/>
    <lineage>
        <taxon>Eukaryota</taxon>
        <taxon>Metazoa</taxon>
        <taxon>Chordata</taxon>
        <taxon>Craniata</taxon>
        <taxon>Vertebrata</taxon>
        <taxon>Euteleostomi</taxon>
        <taxon>Mammalia</taxon>
        <taxon>Eutheria</taxon>
        <taxon>Euarchontoglires</taxon>
        <taxon>Glires</taxon>
        <taxon>Rodentia</taxon>
        <taxon>Myomorpha</taxon>
        <taxon>Muroidea</taxon>
        <taxon>Muridae</taxon>
        <taxon>Murinae</taxon>
        <taxon>Rattus</taxon>
    </lineage>
</organism>
<accession>Q6W3E9</accession>
<protein>
    <recommendedName>
        <fullName>Prolyl 4-hydroxylase subunit alpha-3</fullName>
        <shortName>4-PH alpha-3</shortName>
        <ecNumber evidence="2">1.14.11.2</ecNumber>
    </recommendedName>
    <alternativeName>
        <fullName>Procollagen-proline,2-oxoglutarate-4-dioxygenase subunit alpha-3</fullName>
    </alternativeName>
</protein>
<comment type="function">
    <text evidence="2">Catalyzes the post-translational formation of 4-hydroxyproline in -Xaa-Pro-Gly- sequences in collagens and other proteins.</text>
</comment>
<comment type="catalytic activity">
    <reaction evidence="2">
        <text>L-prolyl-[collagen] + 2-oxoglutarate + O2 = trans-4-hydroxy-L-prolyl-[collagen] + succinate + CO2</text>
        <dbReference type="Rhea" id="RHEA:18945"/>
        <dbReference type="Rhea" id="RHEA-COMP:11676"/>
        <dbReference type="Rhea" id="RHEA-COMP:11680"/>
        <dbReference type="ChEBI" id="CHEBI:15379"/>
        <dbReference type="ChEBI" id="CHEBI:16526"/>
        <dbReference type="ChEBI" id="CHEBI:16810"/>
        <dbReference type="ChEBI" id="CHEBI:30031"/>
        <dbReference type="ChEBI" id="CHEBI:50342"/>
        <dbReference type="ChEBI" id="CHEBI:61965"/>
        <dbReference type="EC" id="1.14.11.2"/>
    </reaction>
    <physiologicalReaction direction="left-to-right" evidence="2">
        <dbReference type="Rhea" id="RHEA:18946"/>
    </physiologicalReaction>
</comment>
<comment type="cofactor">
    <cofactor evidence="2">
        <name>Fe(2+)</name>
        <dbReference type="ChEBI" id="CHEBI:29033"/>
    </cofactor>
    <text evidence="2">Binds 1 Fe(2+) ion per subunit.</text>
</comment>
<comment type="cofactor">
    <cofactor evidence="2">
        <name>L-ascorbate</name>
        <dbReference type="ChEBI" id="CHEBI:38290"/>
    </cofactor>
</comment>
<comment type="subunit">
    <text evidence="2">Heterotetramer of two alpha-3 chains and two beta chains (the beta chain is the multi-functional PDI).</text>
</comment>
<comment type="subcellular location">
    <subcellularLocation>
        <location evidence="1">Endoplasmic reticulum lumen</location>
    </subcellularLocation>
</comment>
<comment type="PTM">
    <text evidence="1">N-glycosylation plays no role in the catalytic activity.</text>
</comment>
<comment type="similarity">
    <text evidence="5">Belongs to the P4HA family.</text>
</comment>
<evidence type="ECO:0000250" key="1"/>
<evidence type="ECO:0000250" key="2">
    <source>
        <dbReference type="UniProtKB" id="Q7Z4N8"/>
    </source>
</evidence>
<evidence type="ECO:0000255" key="3"/>
<evidence type="ECO:0000255" key="4">
    <source>
        <dbReference type="PROSITE-ProRule" id="PRU00805"/>
    </source>
</evidence>
<evidence type="ECO:0000305" key="5"/>
<feature type="signal peptide" evidence="3">
    <location>
        <begin position="1"/>
        <end position="24"/>
    </location>
</feature>
<feature type="chain" id="PRO_0000317768" description="Prolyl 4-hydroxylase subunit alpha-3">
    <location>
        <begin position="25"/>
        <end position="544"/>
    </location>
</feature>
<feature type="repeat" description="TPR">
    <location>
        <begin position="227"/>
        <end position="260"/>
    </location>
</feature>
<feature type="domain" description="Fe2OG dioxygenase" evidence="4">
    <location>
        <begin position="422"/>
        <end position="529"/>
    </location>
</feature>
<feature type="binding site" evidence="4">
    <location>
        <position position="440"/>
    </location>
    <ligand>
        <name>Fe cation</name>
        <dbReference type="ChEBI" id="CHEBI:24875"/>
    </ligand>
</feature>
<feature type="binding site" evidence="4">
    <location>
        <position position="442"/>
    </location>
    <ligand>
        <name>Fe cation</name>
        <dbReference type="ChEBI" id="CHEBI:24875"/>
    </ligand>
</feature>
<feature type="binding site" evidence="4">
    <location>
        <position position="510"/>
    </location>
    <ligand>
        <name>Fe cation</name>
        <dbReference type="ChEBI" id="CHEBI:24875"/>
    </ligand>
</feature>
<feature type="binding site" evidence="4">
    <location>
        <position position="520"/>
    </location>
    <ligand>
        <name>2-oxoglutarate</name>
        <dbReference type="ChEBI" id="CHEBI:16810"/>
    </ligand>
</feature>
<feature type="glycosylation site" description="N-linked (GlcNAc...) asparagine" evidence="3">
    <location>
        <position position="242"/>
    </location>
</feature>
<feature type="glycosylation site" description="N-linked (GlcNAc...) asparagine" evidence="3">
    <location>
        <position position="482"/>
    </location>
</feature>
<reference key="1">
    <citation type="journal article" date="2003" name="J. Biol. Chem.">
        <title>Identification and characterization of a third human, rat, and mouse collagen prolyl 4-hydroxylase isoenzyme.</title>
        <authorList>
            <person name="Kukkola L."/>
            <person name="Hieta R."/>
            <person name="Kivirikko K.I."/>
            <person name="Myllyharju J."/>
        </authorList>
    </citation>
    <scope>NUCLEOTIDE SEQUENCE [MRNA]</scope>
    <source>
        <strain>Sprague-Dawley</strain>
    </source>
</reference>
<gene>
    <name type="primary">P4ha3</name>
</gene>